<gene>
    <name type="primary">cugbp1-a</name>
    <name type="synonym">celf1-a</name>
</gene>
<protein>
    <recommendedName>
        <fullName>CUGBP Elav-like family member 1-A</fullName>
        <shortName>CELF-1A</shortName>
    </recommendedName>
    <alternativeName>
        <fullName>Bruno-like protein 2-A</fullName>
    </alternativeName>
    <alternativeName>
        <fullName>CUG triplet repeat RNA-binding protein 1-A</fullName>
        <shortName>CUG-BP1-A</shortName>
    </alternativeName>
    <alternativeName>
        <fullName>CUG-BP- and ETR-3-like factor 1-A</fullName>
    </alternativeName>
    <alternativeName>
        <fullName>Embryo deadenylation element-binding protein A</fullName>
        <shortName>EDEN-BP-A</shortName>
    </alternativeName>
    <alternativeName>
        <fullName>RNA-binding protein BRUNOL-2-A</fullName>
    </alternativeName>
    <alternativeName>
        <fullName>p53/p55</fullName>
    </alternativeName>
</protein>
<keyword id="KW-0010">Activator</keyword>
<keyword id="KW-0963">Cytoplasm</keyword>
<keyword id="KW-0903">Direct protein sequencing</keyword>
<keyword id="KW-0507">mRNA processing</keyword>
<keyword id="KW-0508">mRNA splicing</keyword>
<keyword id="KW-0539">Nucleus</keyword>
<keyword id="KW-0597">Phosphoprotein</keyword>
<keyword id="KW-1185">Reference proteome</keyword>
<keyword id="KW-0677">Repeat</keyword>
<keyword id="KW-0694">RNA-binding</keyword>
<sequence length="489" mass="52424">MNGTMDHPDHPDPDSIKMFVGQVPRSWSEKELRELFEQYGAVYEINVLRDRSQNPPQSKGCCFITFYTRKAALEAQNALHNMKVLPGMHHPIQMKPADSEKNNAVEDRKLFIGMVSKNCNENDIRAMFSPFGQIEECRILRGPDGMSRGCAFVTFTTRSMAQMAIKSMHQAQTMEGCSSPIVVKFADTQKDKEQKRMTQQLQQQMQQLNAASMWGNLTGLNSLAPQYLALLQQTASSGNLNSLSGLHPMGAEYGTGMTSGLNAIQLQNLAALAAAASAAQNTPSAGAALTSSSSPLSILTSSGSSPSSNNSSINTMASLGALQTLAGATAGLNVNSLAGMAAFNGGLGSSLSNGTGSTMEALSQAYSGIQQYAAAALPSLYNQSLLSQQGLGAAGSQKEGPEGANLFIYHLPQEFGDQDLLQMFMPFGNVVSSKVFIDKQTNLSKCFGFVSYDNPVSAQAAIQSMNGFQIGMKRLKVQLKRSKNDSKPY</sequence>
<evidence type="ECO:0000250" key="1"/>
<evidence type="ECO:0000255" key="2">
    <source>
        <dbReference type="PROSITE-ProRule" id="PRU00176"/>
    </source>
</evidence>
<evidence type="ECO:0000269" key="3">
    <source>
    </source>
</evidence>
<evidence type="ECO:0000269" key="4">
    <source>
    </source>
</evidence>
<evidence type="ECO:0000269" key="5">
    <source>
    </source>
</evidence>
<evidence type="ECO:0000269" key="6">
    <source>
    </source>
</evidence>
<evidence type="ECO:0000269" key="7">
    <source>
    </source>
</evidence>
<evidence type="ECO:0000269" key="8">
    <source>
    </source>
</evidence>
<evidence type="ECO:0000269" key="9">
    <source>
    </source>
</evidence>
<evidence type="ECO:0000305" key="10"/>
<accession>O57406</accession>
<feature type="chain" id="PRO_0000295186" description="CUGBP Elav-like family member 1-A">
    <location>
        <begin position="1"/>
        <end position="489"/>
    </location>
</feature>
<feature type="domain" description="RRM 1" evidence="2">
    <location>
        <begin position="16"/>
        <end position="99"/>
    </location>
</feature>
<feature type="domain" description="RRM 2" evidence="2">
    <location>
        <begin position="108"/>
        <end position="188"/>
    </location>
</feature>
<feature type="domain" description="RRM 3" evidence="2">
    <location>
        <begin position="404"/>
        <end position="482"/>
    </location>
</feature>
<feature type="region of interest" description="Necessary for oligomerization and EDEN-dependent deadenylation">
    <location>
        <begin position="183"/>
        <end position="210"/>
    </location>
</feature>
<name>CEL1A_XENLA</name>
<organism>
    <name type="scientific">Xenopus laevis</name>
    <name type="common">African clawed frog</name>
    <dbReference type="NCBI Taxonomy" id="8355"/>
    <lineage>
        <taxon>Eukaryota</taxon>
        <taxon>Metazoa</taxon>
        <taxon>Chordata</taxon>
        <taxon>Craniata</taxon>
        <taxon>Vertebrata</taxon>
        <taxon>Euteleostomi</taxon>
        <taxon>Amphibia</taxon>
        <taxon>Batrachia</taxon>
        <taxon>Anura</taxon>
        <taxon>Pipoidea</taxon>
        <taxon>Pipidae</taxon>
        <taxon>Xenopodinae</taxon>
        <taxon>Xenopus</taxon>
        <taxon>Xenopus</taxon>
    </lineage>
</organism>
<dbReference type="EMBL" id="AF003923">
    <property type="protein sequence ID" value="AAC41243.1"/>
    <property type="molecule type" value="mRNA"/>
</dbReference>
<dbReference type="EMBL" id="BC108574">
    <property type="protein sequence ID" value="AAI08575.1"/>
    <property type="molecule type" value="mRNA"/>
</dbReference>
<dbReference type="RefSeq" id="NP_001084196.1">
    <property type="nucleotide sequence ID" value="NM_001090727.1"/>
</dbReference>
<dbReference type="SMR" id="O57406"/>
<dbReference type="DNASU" id="399360"/>
<dbReference type="GeneID" id="399360"/>
<dbReference type="KEGG" id="xla:399360"/>
<dbReference type="AGR" id="Xenbase:XB-GENE-854043"/>
<dbReference type="CTD" id="399360"/>
<dbReference type="Xenbase" id="XB-GENE-854043">
    <property type="gene designation" value="celf1.L"/>
</dbReference>
<dbReference type="OrthoDB" id="410044at2759"/>
<dbReference type="Proteomes" id="UP000186698">
    <property type="component" value="Chromosome 4L"/>
</dbReference>
<dbReference type="Bgee" id="399360">
    <property type="expression patterns" value="Expressed in neurula embryo and 19 other cell types or tissues"/>
</dbReference>
<dbReference type="GO" id="GO:0005737">
    <property type="term" value="C:cytoplasm"/>
    <property type="evidence" value="ECO:0000318"/>
    <property type="project" value="GO_Central"/>
</dbReference>
<dbReference type="GO" id="GO:0005634">
    <property type="term" value="C:nucleus"/>
    <property type="evidence" value="ECO:0000318"/>
    <property type="project" value="GO_Central"/>
</dbReference>
<dbReference type="GO" id="GO:1990904">
    <property type="term" value="C:ribonucleoprotein complex"/>
    <property type="evidence" value="ECO:0000318"/>
    <property type="project" value="GO_Central"/>
</dbReference>
<dbReference type="GO" id="GO:0003730">
    <property type="term" value="F:mRNA 3'-UTR binding"/>
    <property type="evidence" value="ECO:0000318"/>
    <property type="project" value="GO_Central"/>
</dbReference>
<dbReference type="GO" id="GO:0006376">
    <property type="term" value="P:mRNA splice site recognition"/>
    <property type="evidence" value="ECO:0000318"/>
    <property type="project" value="GO_Central"/>
</dbReference>
<dbReference type="GO" id="GO:0000381">
    <property type="term" value="P:regulation of alternative mRNA splicing, via spliceosome"/>
    <property type="evidence" value="ECO:0000318"/>
    <property type="project" value="GO_Central"/>
</dbReference>
<dbReference type="CDD" id="cd12631">
    <property type="entry name" value="RRM1_CELF1_2_Bruno"/>
    <property type="match status" value="1"/>
</dbReference>
<dbReference type="CDD" id="cd12634">
    <property type="entry name" value="RRM2_CELF1_2"/>
    <property type="match status" value="1"/>
</dbReference>
<dbReference type="CDD" id="cd12638">
    <property type="entry name" value="RRM3_CELF1_2"/>
    <property type="match status" value="1"/>
</dbReference>
<dbReference type="FunFam" id="3.30.70.330:FF:000013">
    <property type="entry name" value="CUGBP Elav-like family member 1 isoform 2"/>
    <property type="match status" value="1"/>
</dbReference>
<dbReference type="FunFam" id="3.30.70.330:FF:000015">
    <property type="entry name" value="CUGBP Elav-like family member 1 isoform 2"/>
    <property type="match status" value="1"/>
</dbReference>
<dbReference type="FunFam" id="3.30.70.330:FF:000016">
    <property type="entry name" value="CUGBP Elav-like family member 1 isoform 2"/>
    <property type="match status" value="1"/>
</dbReference>
<dbReference type="Gene3D" id="3.30.70.330">
    <property type="match status" value="3"/>
</dbReference>
<dbReference type="InterPro" id="IPR034196">
    <property type="entry name" value="CELF1/2_RRM1"/>
</dbReference>
<dbReference type="InterPro" id="IPR034198">
    <property type="entry name" value="CELF1/2_RRM2"/>
</dbReference>
<dbReference type="InterPro" id="IPR034199">
    <property type="entry name" value="CELF1/2_RRM3"/>
</dbReference>
<dbReference type="InterPro" id="IPR012677">
    <property type="entry name" value="Nucleotide-bd_a/b_plait_sf"/>
</dbReference>
<dbReference type="InterPro" id="IPR035979">
    <property type="entry name" value="RBD_domain_sf"/>
</dbReference>
<dbReference type="InterPro" id="IPR000504">
    <property type="entry name" value="RRM_dom"/>
</dbReference>
<dbReference type="PANTHER" id="PTHR24012">
    <property type="entry name" value="RNA BINDING PROTEIN"/>
    <property type="match status" value="1"/>
</dbReference>
<dbReference type="Pfam" id="PF00076">
    <property type="entry name" value="RRM_1"/>
    <property type="match status" value="3"/>
</dbReference>
<dbReference type="SMART" id="SM00360">
    <property type="entry name" value="RRM"/>
    <property type="match status" value="3"/>
</dbReference>
<dbReference type="SUPFAM" id="SSF54928">
    <property type="entry name" value="RNA-binding domain, RBD"/>
    <property type="match status" value="2"/>
</dbReference>
<dbReference type="PROSITE" id="PS50102">
    <property type="entry name" value="RRM"/>
    <property type="match status" value="3"/>
</dbReference>
<proteinExistence type="evidence at protein level"/>
<comment type="function">
    <text evidence="1 3 5 6 7 9">RNA-binding protein implicated in the regulation of several post-transcriptional events. May be involved in pre-mRNA alternative splicing, mRNA translation activation and stability (By similarity). Mediates the rapid and sequence-specific cytoplasmic deadenylation of EDEN-containing maternal mRNAs following fertilization. Binds to AU-rich sequences (AREs) of jun mRNA. Binds to the embryonic deadenylation element (EDEN) motif localized in the 3'-UTR of maternal mRNAs. Binds to RNA containing several repeats of the consensus sequence 5'-UGU-3'. EDEN-dependent deadenylation is enhanced by the presence of an additional cis element composed of three AUU repeats.</text>
</comment>
<comment type="subunit">
    <text evidence="6">Oligomer. Oligomerization is required for RNA-binding and EDEN-dependent deadenylation.</text>
</comment>
<comment type="subcellular location">
    <subcellularLocation>
        <location evidence="8">Nucleus</location>
    </subcellularLocation>
    <subcellularLocation>
        <location evidence="8">Cytoplasm</location>
    </subcellularLocation>
</comment>
<comment type="developmental stage">
    <text evidence="8">Expressed in egg and embryo (at protein level).</text>
</comment>
<comment type="domain">
    <text>The 2 N-terminal RRMs and a part of the linker region (between RRM2 and RRM3) are necessary for binding to EDEN of mos mRNA.</text>
</comment>
<comment type="PTM">
    <text evidence="4">Phosphorylated during oocyte maturation and dephosphorylated following egg activation. Dephosphorylation is calcium dependent and correlates with the increase in the activity of EDEN-dependent deadenylation.</text>
</comment>
<comment type="similarity">
    <text evidence="10">Belongs to the CELF/BRUNOL family.</text>
</comment>
<reference key="1">
    <citation type="journal article" date="1998" name="EMBO J.">
        <title>EDEN and EDEN-BP, a cis element and an associated factor that mediate sequence-specific mRNA deadenylation in Xenopus embryos.</title>
        <authorList>
            <person name="Paillard L."/>
            <person name="Omilli F."/>
            <person name="Legagneux V."/>
            <person name="Bassez T."/>
            <person name="Maniey D."/>
            <person name="Osborne H.B."/>
        </authorList>
    </citation>
    <scope>NUCLEOTIDE SEQUENCE [MRNA]</scope>
    <scope>PROTEIN SEQUENCE OF 18-24; 167-176; 196-213 AND 399-420</scope>
    <scope>RNA-BINDING</scope>
    <scope>SUBCELLULAR LOCATION</scope>
    <scope>DEVELOPMENTAL STAGE</scope>
    <source>
        <tissue>Ovary</tissue>
    </source>
</reference>
<reference key="2">
    <citation type="submission" date="2005-11" db="EMBL/GenBank/DDBJ databases">
        <authorList>
            <consortium name="NIH - Xenopus Gene Collection (XGC) project"/>
        </authorList>
    </citation>
    <scope>NUCLEOTIDE SEQUENCE [LARGE SCALE MRNA]</scope>
    <source>
        <tissue>Embryo</tissue>
    </source>
</reference>
<reference key="3">
    <citation type="journal article" date="1998" name="Mol. Cell. Biol.">
        <title>Embryo deadenylation element-dependent deadenylation is enhanced by a cis element containing AUU repeats.</title>
        <authorList>
            <person name="Audic Y."/>
            <person name="Omilli F."/>
            <person name="Osborne H.B."/>
        </authorList>
    </citation>
    <scope>FUNCTION</scope>
    <scope>RNA-BINDING</scope>
</reference>
<reference key="4">
    <citation type="journal article" date="2002" name="J. Biol. Chem.">
        <title>c-Jun ARE targets mRNA deadenylation by an EDEN-BP (embryo deadenylation element-binding protein)-dependent pathway.</title>
        <authorList>
            <person name="Paillard L."/>
            <person name="Legagneux V."/>
            <person name="Maniey D."/>
            <person name="Osborne H.B."/>
        </authorList>
    </citation>
    <scope>FUNCTION</scope>
    <scope>RNA-BINDING</scope>
</reference>
<reference key="5">
    <citation type="journal article" date="2002" name="Nucleic Acids Res.">
        <title>An analysis of the sequence requirements of EDEN-BP for specific RNA binding.</title>
        <authorList>
            <person name="Bonnet-Corven S."/>
            <person name="Audic Y."/>
            <person name="Omilli F."/>
            <person name="Osborne H.B."/>
        </authorList>
    </citation>
    <scope>RNA-BINDING</scope>
</reference>
<reference key="6">
    <citation type="journal article" date="2003" name="Biol. Cell">
        <title>A functional deadenylation assay identifies human CUG-BP as a deadenylation factor.</title>
        <authorList>
            <person name="Paillard L."/>
            <person name="Legagneux V."/>
            <person name="Beverley Osborne H."/>
        </authorList>
    </citation>
    <scope>FUNCTION</scope>
    <scope>RNA-BINDING</scope>
</reference>
<reference key="7">
    <citation type="journal article" date="2003" name="J. Cell Sci.">
        <title>Regulation of EDEN-dependent deadenylation of Aurora A/Eg2-derived mRNA via phosphorylation and dephosphorylation in Xenopus laevis egg extracts.</title>
        <authorList>
            <person name="Detivaud L."/>
            <person name="Pascreau G."/>
            <person name="Karaieskou A."/>
            <person name="Osborne H.B."/>
            <person name="Kubiak J.Z."/>
        </authorList>
    </citation>
    <scope>PHOSPHORYLATION</scope>
</reference>
<reference key="8">
    <citation type="journal article" date="2006" name="Biol. Cell">
        <title>Oligomerization of EDEN-BP is required for specific mRNA deadenylation and binding.</title>
        <authorList>
            <person name="Cosson B."/>
            <person name="Gautier-Courteille C."/>
            <person name="Maniey D."/>
            <person name="Aiet-Ahmed O."/>
            <person name="Lesimple M."/>
            <person name="Osborne H.B."/>
            <person name="Paillard L."/>
        </authorList>
    </citation>
    <scope>FUNCTION</scope>
    <scope>SUBUNIT</scope>
    <scope>RNA-BINDING</scope>
</reference>
<reference key="9">
    <citation type="journal article" date="2006" name="Biochem. J.">
        <title>CUG-BP1/CELF1 requires UGU-rich sequences for high-affinity binding.</title>
        <authorList>
            <person name="Marquis J."/>
            <person name="Paillard L."/>
            <person name="Audic Y."/>
            <person name="Cosson B."/>
            <person name="Danos O."/>
            <person name="Le Bec C."/>
            <person name="Osborne H.B."/>
        </authorList>
    </citation>
    <scope>FUNCTION</scope>
    <scope>RNA-BINDING</scope>
</reference>